<comment type="function">
    <text evidence="1">Allows the formation of correctly charged Gln-tRNA(Gln) through the transamidation of misacylated Glu-tRNA(Gln) in organisms which lack glutaminyl-tRNA synthetase. The reaction takes place in the presence of glutamine and ATP through an activated gamma-phospho-Glu-tRNA(Gln).</text>
</comment>
<comment type="catalytic activity">
    <reaction evidence="1">
        <text>L-glutamyl-tRNA(Gln) + L-glutamine + ATP + H2O = L-glutaminyl-tRNA(Gln) + L-glutamate + ADP + phosphate + H(+)</text>
        <dbReference type="Rhea" id="RHEA:17521"/>
        <dbReference type="Rhea" id="RHEA-COMP:9681"/>
        <dbReference type="Rhea" id="RHEA-COMP:9684"/>
        <dbReference type="ChEBI" id="CHEBI:15377"/>
        <dbReference type="ChEBI" id="CHEBI:15378"/>
        <dbReference type="ChEBI" id="CHEBI:29985"/>
        <dbReference type="ChEBI" id="CHEBI:30616"/>
        <dbReference type="ChEBI" id="CHEBI:43474"/>
        <dbReference type="ChEBI" id="CHEBI:58359"/>
        <dbReference type="ChEBI" id="CHEBI:78520"/>
        <dbReference type="ChEBI" id="CHEBI:78521"/>
        <dbReference type="ChEBI" id="CHEBI:456216"/>
        <dbReference type="EC" id="6.3.5.7"/>
    </reaction>
</comment>
<comment type="subunit">
    <text evidence="1">Heterotrimer of A, B and C subunits.</text>
</comment>
<comment type="similarity">
    <text evidence="1">Belongs to the amidase family. GatA subfamily.</text>
</comment>
<reference key="1">
    <citation type="journal article" date="2003" name="Appl. Microbiol. Biotechnol.">
        <title>The Corynebacterium glutamicum genome: features and impacts on biotechnological processes.</title>
        <authorList>
            <person name="Ikeda M."/>
            <person name="Nakagawa S."/>
        </authorList>
    </citation>
    <scope>NUCLEOTIDE SEQUENCE [LARGE SCALE GENOMIC DNA]</scope>
    <source>
        <strain>ATCC 13032 / DSM 20300 / JCM 1318 / BCRC 11384 / CCUG 27702 / LMG 3730 / NBRC 12168 / NCIMB 10025 / NRRL B-2784 / 534</strain>
    </source>
</reference>
<reference key="2">
    <citation type="journal article" date="2003" name="J. Biotechnol.">
        <title>The complete Corynebacterium glutamicum ATCC 13032 genome sequence and its impact on the production of L-aspartate-derived amino acids and vitamins.</title>
        <authorList>
            <person name="Kalinowski J."/>
            <person name="Bathe B."/>
            <person name="Bartels D."/>
            <person name="Bischoff N."/>
            <person name="Bott M."/>
            <person name="Burkovski A."/>
            <person name="Dusch N."/>
            <person name="Eggeling L."/>
            <person name="Eikmanns B.J."/>
            <person name="Gaigalat L."/>
            <person name="Goesmann A."/>
            <person name="Hartmann M."/>
            <person name="Huthmacher K."/>
            <person name="Kraemer R."/>
            <person name="Linke B."/>
            <person name="McHardy A.C."/>
            <person name="Meyer F."/>
            <person name="Moeckel B."/>
            <person name="Pfefferle W."/>
            <person name="Puehler A."/>
            <person name="Rey D.A."/>
            <person name="Rueckert C."/>
            <person name="Rupp O."/>
            <person name="Sahm H."/>
            <person name="Wendisch V.F."/>
            <person name="Wiegraebe I."/>
            <person name="Tauch A."/>
        </authorList>
    </citation>
    <scope>NUCLEOTIDE SEQUENCE [LARGE SCALE GENOMIC DNA]</scope>
    <source>
        <strain>ATCC 13032 / DSM 20300 / JCM 1318 / BCRC 11384 / CCUG 27702 / LMG 3730 / NBRC 12168 / NCIMB 10025 / NRRL B-2784 / 534</strain>
    </source>
</reference>
<evidence type="ECO:0000255" key="1">
    <source>
        <dbReference type="HAMAP-Rule" id="MF_00120"/>
    </source>
</evidence>
<evidence type="ECO:0000256" key="2">
    <source>
        <dbReference type="SAM" id="MobiDB-lite"/>
    </source>
</evidence>
<organism>
    <name type="scientific">Corynebacterium glutamicum (strain ATCC 13032 / DSM 20300 / JCM 1318 / BCRC 11384 / CCUG 27702 / LMG 3730 / NBRC 12168 / NCIMB 10025 / NRRL B-2784 / 534)</name>
    <dbReference type="NCBI Taxonomy" id="196627"/>
    <lineage>
        <taxon>Bacteria</taxon>
        <taxon>Bacillati</taxon>
        <taxon>Actinomycetota</taxon>
        <taxon>Actinomycetes</taxon>
        <taxon>Mycobacteriales</taxon>
        <taxon>Corynebacteriaceae</taxon>
        <taxon>Corynebacterium</taxon>
    </lineage>
</organism>
<feature type="chain" id="PRO_0000105159" description="Glutamyl-tRNA(Gln) amidotransferase subunit A">
    <location>
        <begin position="1"/>
        <end position="497"/>
    </location>
</feature>
<feature type="region of interest" description="Disordered" evidence="2">
    <location>
        <begin position="143"/>
        <end position="171"/>
    </location>
</feature>
<feature type="active site" description="Charge relay system" evidence="1">
    <location>
        <position position="91"/>
    </location>
</feature>
<feature type="active site" description="Charge relay system" evidence="1">
    <location>
        <position position="166"/>
    </location>
</feature>
<feature type="active site" description="Acyl-ester intermediate" evidence="1">
    <location>
        <position position="190"/>
    </location>
</feature>
<sequence>MTNKYLVEGSENELTTKTAAELAGLIHSREVTSREVTQAHLDRIAAVDGDIHAFLHVGQEEALNAADDVDKRLDAGEAPASALAGVPLALKDVFTTTDAPTTAASKMLEGYMSPYDATVTRKIREAGIPILGKTNMDEFAMGSSTENSAYGPTHNPWDLERTAGGSGGGSSAALAAGQAPLAIGTDTGGSIRQPAALTNTVGVKPTYGTVSRYGLIACASSLDQGGPTARTVLDTALLHEVIAGHDAFDATSVNRPVAPVVQAAREGANGDLKGVKVGVVKQFDRDGYQPGVLEAFHASVEQMRSQGAEIVEVDCPHFDDALGAYYLILPCEVSSNLARFDGMRYGLRAGDDGTRSADEVMAYTRAQGFGPEVKRRIILGTYALSVGYYDAYYLQAQRVRTLIAQDFAKAYEQVDILVSPTTPTTAFKLGEKVTDPLEMYNFDLCTLPLNLAGLAGMSLPSGLASDTGLPVGLQLMAPAFQDDRLYRVGAAFEAGRK</sequence>
<dbReference type="EC" id="6.3.5.7" evidence="1"/>
<dbReference type="EMBL" id="BA000036">
    <property type="protein sequence ID" value="BAB98640.1"/>
    <property type="molecule type" value="Genomic_DNA"/>
</dbReference>
<dbReference type="EMBL" id="BX927151">
    <property type="protein sequence ID" value="CAF19950.1"/>
    <property type="molecule type" value="Genomic_DNA"/>
</dbReference>
<dbReference type="RefSeq" id="NP_600470.1">
    <property type="nucleotide sequence ID" value="NC_003450.3"/>
</dbReference>
<dbReference type="RefSeq" id="WP_011014228.1">
    <property type="nucleotide sequence ID" value="NC_006958.1"/>
</dbReference>
<dbReference type="SMR" id="Q8NR17"/>
<dbReference type="STRING" id="196627.cg1404"/>
<dbReference type="GeneID" id="1019229"/>
<dbReference type="KEGG" id="cgb:cg1404"/>
<dbReference type="KEGG" id="cgl:Cgl1247"/>
<dbReference type="PATRIC" id="fig|196627.13.peg.1224"/>
<dbReference type="eggNOG" id="COG0154">
    <property type="taxonomic scope" value="Bacteria"/>
</dbReference>
<dbReference type="HOGENOM" id="CLU_009600_0_3_11"/>
<dbReference type="OrthoDB" id="9811471at2"/>
<dbReference type="BioCyc" id="CORYNE:G18NG-10820-MONOMER"/>
<dbReference type="Proteomes" id="UP000000582">
    <property type="component" value="Chromosome"/>
</dbReference>
<dbReference type="Proteomes" id="UP000001009">
    <property type="component" value="Chromosome"/>
</dbReference>
<dbReference type="GO" id="GO:0030956">
    <property type="term" value="C:glutamyl-tRNA(Gln) amidotransferase complex"/>
    <property type="evidence" value="ECO:0007669"/>
    <property type="project" value="InterPro"/>
</dbReference>
<dbReference type="GO" id="GO:0005524">
    <property type="term" value="F:ATP binding"/>
    <property type="evidence" value="ECO:0007669"/>
    <property type="project" value="UniProtKB-KW"/>
</dbReference>
<dbReference type="GO" id="GO:0050567">
    <property type="term" value="F:glutaminyl-tRNA synthase (glutamine-hydrolyzing) activity"/>
    <property type="evidence" value="ECO:0007669"/>
    <property type="project" value="UniProtKB-UniRule"/>
</dbReference>
<dbReference type="GO" id="GO:0006412">
    <property type="term" value="P:translation"/>
    <property type="evidence" value="ECO:0007669"/>
    <property type="project" value="UniProtKB-UniRule"/>
</dbReference>
<dbReference type="Gene3D" id="3.90.1300.10">
    <property type="entry name" value="Amidase signature (AS) domain"/>
    <property type="match status" value="1"/>
</dbReference>
<dbReference type="HAMAP" id="MF_00120">
    <property type="entry name" value="GatA"/>
    <property type="match status" value="1"/>
</dbReference>
<dbReference type="InterPro" id="IPR000120">
    <property type="entry name" value="Amidase"/>
</dbReference>
<dbReference type="InterPro" id="IPR020556">
    <property type="entry name" value="Amidase_CS"/>
</dbReference>
<dbReference type="InterPro" id="IPR023631">
    <property type="entry name" value="Amidase_dom"/>
</dbReference>
<dbReference type="InterPro" id="IPR036928">
    <property type="entry name" value="AS_sf"/>
</dbReference>
<dbReference type="InterPro" id="IPR004412">
    <property type="entry name" value="GatA"/>
</dbReference>
<dbReference type="NCBIfam" id="TIGR00132">
    <property type="entry name" value="gatA"/>
    <property type="match status" value="1"/>
</dbReference>
<dbReference type="PANTHER" id="PTHR11895:SF151">
    <property type="entry name" value="GLUTAMYL-TRNA(GLN) AMIDOTRANSFERASE SUBUNIT A"/>
    <property type="match status" value="1"/>
</dbReference>
<dbReference type="PANTHER" id="PTHR11895">
    <property type="entry name" value="TRANSAMIDASE"/>
    <property type="match status" value="1"/>
</dbReference>
<dbReference type="Pfam" id="PF01425">
    <property type="entry name" value="Amidase"/>
    <property type="match status" value="1"/>
</dbReference>
<dbReference type="SUPFAM" id="SSF75304">
    <property type="entry name" value="Amidase signature (AS) enzymes"/>
    <property type="match status" value="1"/>
</dbReference>
<dbReference type="PROSITE" id="PS00571">
    <property type="entry name" value="AMIDASES"/>
    <property type="match status" value="1"/>
</dbReference>
<keyword id="KW-0067">ATP-binding</keyword>
<keyword id="KW-0436">Ligase</keyword>
<keyword id="KW-0547">Nucleotide-binding</keyword>
<keyword id="KW-0648">Protein biosynthesis</keyword>
<keyword id="KW-1185">Reference proteome</keyword>
<name>GATA_CORGL</name>
<gene>
    <name evidence="1" type="primary">gatA</name>
    <name type="ordered locus">Cgl1247</name>
    <name type="ordered locus">cg1404</name>
</gene>
<proteinExistence type="inferred from homology"/>
<accession>Q8NR17</accession>
<protein>
    <recommendedName>
        <fullName evidence="1">Glutamyl-tRNA(Gln) amidotransferase subunit A</fullName>
        <shortName evidence="1">Glu-ADT subunit A</shortName>
        <ecNumber evidence="1">6.3.5.7</ecNumber>
    </recommendedName>
</protein>